<dbReference type="EMBL" id="BA000003">
    <property type="protein sequence ID" value="BAB13167.1"/>
    <property type="molecule type" value="Genomic_DNA"/>
</dbReference>
<dbReference type="RefSeq" id="NP_240281.1">
    <property type="nucleotide sequence ID" value="NC_002528.1"/>
</dbReference>
<dbReference type="RefSeq" id="WP_009874422.1">
    <property type="nucleotide sequence ID" value="NZ_AP036055.1"/>
</dbReference>
<dbReference type="SMR" id="P57542"/>
<dbReference type="STRING" id="563178.BUAP5A_463"/>
<dbReference type="EnsemblBacteria" id="BAB13167">
    <property type="protein sequence ID" value="BAB13167"/>
    <property type="gene ID" value="BAB13167"/>
</dbReference>
<dbReference type="KEGG" id="buc:BU470"/>
<dbReference type="PATRIC" id="fig|107806.10.peg.479"/>
<dbReference type="eggNOG" id="COG1845">
    <property type="taxonomic scope" value="Bacteria"/>
</dbReference>
<dbReference type="HOGENOM" id="CLU_044071_3_0_6"/>
<dbReference type="Proteomes" id="UP000001806">
    <property type="component" value="Chromosome"/>
</dbReference>
<dbReference type="GO" id="GO:0005886">
    <property type="term" value="C:plasma membrane"/>
    <property type="evidence" value="ECO:0007669"/>
    <property type="project" value="UniProtKB-SubCell"/>
</dbReference>
<dbReference type="GO" id="GO:0009486">
    <property type="term" value="F:cytochrome bo3 ubiquinol oxidase activity"/>
    <property type="evidence" value="ECO:0007669"/>
    <property type="project" value="InterPro"/>
</dbReference>
<dbReference type="GO" id="GO:0004129">
    <property type="term" value="F:cytochrome-c oxidase activity"/>
    <property type="evidence" value="ECO:0007669"/>
    <property type="project" value="InterPro"/>
</dbReference>
<dbReference type="GO" id="GO:0019646">
    <property type="term" value="P:aerobic electron transport chain"/>
    <property type="evidence" value="ECO:0007669"/>
    <property type="project" value="InterPro"/>
</dbReference>
<dbReference type="FunFam" id="1.20.120.80:FF:000001">
    <property type="entry name" value="Cytochrome (Ubi)quinol oxidase subunit III"/>
    <property type="match status" value="1"/>
</dbReference>
<dbReference type="Gene3D" id="1.20.120.80">
    <property type="entry name" value="Cytochrome c oxidase, subunit III, four-helix bundle"/>
    <property type="match status" value="1"/>
</dbReference>
<dbReference type="InterPro" id="IPR024791">
    <property type="entry name" value="Cyt_c/ubiquinol_Oxase_su3"/>
</dbReference>
<dbReference type="InterPro" id="IPR000298">
    <property type="entry name" value="Cyt_c_oxidase-like_su3"/>
</dbReference>
<dbReference type="InterPro" id="IPR035973">
    <property type="entry name" value="Cyt_c_oxidase_su3-like_sf"/>
</dbReference>
<dbReference type="InterPro" id="IPR013833">
    <property type="entry name" value="Cyt_c_oxidase_su3_a-hlx"/>
</dbReference>
<dbReference type="InterPro" id="IPR014206">
    <property type="entry name" value="Cyt_c_ubiqinol_oxidase_su3"/>
</dbReference>
<dbReference type="NCBIfam" id="TIGR02842">
    <property type="entry name" value="CyoC"/>
    <property type="match status" value="1"/>
</dbReference>
<dbReference type="PANTHER" id="PTHR11403:SF2">
    <property type="entry name" value="CYTOCHROME BO(3) UBIQUINOL OXIDASE SUBUNIT 3"/>
    <property type="match status" value="1"/>
</dbReference>
<dbReference type="PANTHER" id="PTHR11403">
    <property type="entry name" value="CYTOCHROME C OXIDASE SUBUNIT III"/>
    <property type="match status" value="1"/>
</dbReference>
<dbReference type="Pfam" id="PF00510">
    <property type="entry name" value="COX3"/>
    <property type="match status" value="1"/>
</dbReference>
<dbReference type="SUPFAM" id="SSF81452">
    <property type="entry name" value="Cytochrome c oxidase subunit III-like"/>
    <property type="match status" value="1"/>
</dbReference>
<dbReference type="PROSITE" id="PS50253">
    <property type="entry name" value="COX3"/>
    <property type="match status" value="1"/>
</dbReference>
<reference key="1">
    <citation type="journal article" date="2000" name="Nature">
        <title>Genome sequence of the endocellular bacterial symbiont of aphids Buchnera sp. APS.</title>
        <authorList>
            <person name="Shigenobu S."/>
            <person name="Watanabe H."/>
            <person name="Hattori M."/>
            <person name="Sakaki Y."/>
            <person name="Ishikawa H."/>
        </authorList>
    </citation>
    <scope>NUCLEOTIDE SEQUENCE [LARGE SCALE GENOMIC DNA]</scope>
    <source>
        <strain>APS</strain>
    </source>
</reference>
<sequence>MIENKFNNTILNSNSSTHDKISETKKLFGLWIYLMSDCIMFAVLFAVYAIVSSNISINLISNKIFNLSSILLETFLLLLSSLSCGFVVIAMNQKRIKMIYSFLTITFIFGLIFLLMEVHEFYELIIENFGPDKNAFFSIFFTLVATHGVHIFFGLILILSILYQIKKLGLTNSIRTRILCFSVFWHFLDIIWICVFTFVYLNGAI</sequence>
<proteinExistence type="inferred from homology"/>
<comment type="function">
    <text evidence="1">Cytochrome bo(3) ubiquinol terminal oxidase is the component of the aerobic respiratory chain of E.coli that predominates when cells are grown at high aeration. Has proton pump activity across the membrane in addition to electron transfer, pumping 2 protons/electron (By similarity).</text>
</comment>
<comment type="subunit">
    <text evidence="1">Heterooctamer of two A chains, two B chains, two C chains and two D chains.</text>
</comment>
<comment type="subcellular location">
    <subcellularLocation>
        <location evidence="1">Cell membrane</location>
        <topology evidence="1">Multi-pass membrane protein</topology>
    </subcellularLocation>
</comment>
<comment type="similarity">
    <text evidence="3">Belongs to the cytochrome c oxidase subunit 3 family.</text>
</comment>
<keyword id="KW-1003">Cell membrane</keyword>
<keyword id="KW-0249">Electron transport</keyword>
<keyword id="KW-0472">Membrane</keyword>
<keyword id="KW-0560">Oxidoreductase</keyword>
<keyword id="KW-1185">Reference proteome</keyword>
<keyword id="KW-0812">Transmembrane</keyword>
<keyword id="KW-1133">Transmembrane helix</keyword>
<keyword id="KW-0813">Transport</keyword>
<name>CYOC_BUCAI</name>
<protein>
    <recommendedName>
        <fullName>Cytochrome bo(3) ubiquinol oxidase subunit 3</fullName>
    </recommendedName>
    <alternativeName>
        <fullName>Cytochrome o ubiquinol oxidase subunit 3</fullName>
        <shortName>Cytochrome o subunit 3</shortName>
    </alternativeName>
    <alternativeName>
        <fullName>Oxidase bo(3) subunit 3</fullName>
    </alternativeName>
    <alternativeName>
        <fullName>Ubiquinol oxidase polypeptide III</fullName>
    </alternativeName>
    <alternativeName>
        <fullName>Ubiquinol oxidase subunit 3</fullName>
    </alternativeName>
</protein>
<feature type="chain" id="PRO_0000183896" description="Cytochrome bo(3) ubiquinol oxidase subunit 3">
    <location>
        <begin position="1"/>
        <end position="205"/>
    </location>
</feature>
<feature type="topological domain" description="Cytoplasmic" evidence="2">
    <location>
        <begin position="1"/>
        <end position="26"/>
    </location>
</feature>
<feature type="transmembrane region" description="Helical" evidence="2">
    <location>
        <begin position="27"/>
        <end position="47"/>
    </location>
</feature>
<feature type="topological domain" description="Extracellular" evidence="2">
    <location>
        <begin position="48"/>
        <end position="69"/>
    </location>
</feature>
<feature type="transmembrane region" description="Helical" evidence="2">
    <location>
        <begin position="70"/>
        <end position="90"/>
    </location>
</feature>
<feature type="topological domain" description="Cytoplasmic" evidence="2">
    <location>
        <begin position="91"/>
        <end position="97"/>
    </location>
</feature>
<feature type="transmembrane region" description="Helical" evidence="2">
    <location>
        <begin position="98"/>
        <end position="118"/>
    </location>
</feature>
<feature type="topological domain" description="Extracellular" evidence="2">
    <location>
        <begin position="119"/>
        <end position="138"/>
    </location>
</feature>
<feature type="transmembrane region" description="Helical" evidence="2">
    <location>
        <begin position="139"/>
        <end position="159"/>
    </location>
</feature>
<feature type="topological domain" description="Cytoplasmic" evidence="2">
    <location>
        <begin position="160"/>
        <end position="177"/>
    </location>
</feature>
<feature type="transmembrane region" description="Helical" evidence="2">
    <location>
        <begin position="178"/>
        <end position="198"/>
    </location>
</feature>
<feature type="topological domain" description="Extracellular" evidence="2">
    <location>
        <begin position="199"/>
        <end position="205"/>
    </location>
</feature>
<accession>P57542</accession>
<organism>
    <name type="scientific">Buchnera aphidicola subsp. Acyrthosiphon pisum (strain APS)</name>
    <name type="common">Acyrthosiphon pisum symbiotic bacterium</name>
    <dbReference type="NCBI Taxonomy" id="107806"/>
    <lineage>
        <taxon>Bacteria</taxon>
        <taxon>Pseudomonadati</taxon>
        <taxon>Pseudomonadota</taxon>
        <taxon>Gammaproteobacteria</taxon>
        <taxon>Enterobacterales</taxon>
        <taxon>Erwiniaceae</taxon>
        <taxon>Buchnera</taxon>
    </lineage>
</organism>
<evidence type="ECO:0000250" key="1"/>
<evidence type="ECO:0000255" key="2"/>
<evidence type="ECO:0000305" key="3"/>
<gene>
    <name type="primary">cyoC</name>
    <name type="ordered locus">BU470</name>
</gene>